<proteinExistence type="inferred from homology"/>
<accession>Q31KC5</accession>
<dbReference type="EC" id="5.1.3.9" evidence="1"/>
<dbReference type="EMBL" id="CP000100">
    <property type="protein sequence ID" value="ABB58494.1"/>
    <property type="molecule type" value="Genomic_DNA"/>
</dbReference>
<dbReference type="RefSeq" id="WP_011243950.1">
    <property type="nucleotide sequence ID" value="NZ_JACJTX010000001.1"/>
</dbReference>
<dbReference type="SMR" id="Q31KC5"/>
<dbReference type="STRING" id="1140.Synpcc7942_2464"/>
<dbReference type="PaxDb" id="1140-Synpcc7942_2464"/>
<dbReference type="KEGG" id="syf:Synpcc7942_2464"/>
<dbReference type="eggNOG" id="COG3010">
    <property type="taxonomic scope" value="Bacteria"/>
</dbReference>
<dbReference type="HOGENOM" id="CLU_086300_1_0_3"/>
<dbReference type="OrthoDB" id="9781704at2"/>
<dbReference type="BioCyc" id="SYNEL:SYNPCC7942_2464-MONOMER"/>
<dbReference type="UniPathway" id="UPA00629">
    <property type="reaction ID" value="UER00682"/>
</dbReference>
<dbReference type="Proteomes" id="UP000889800">
    <property type="component" value="Chromosome"/>
</dbReference>
<dbReference type="GO" id="GO:0005829">
    <property type="term" value="C:cytosol"/>
    <property type="evidence" value="ECO:0007669"/>
    <property type="project" value="TreeGrafter"/>
</dbReference>
<dbReference type="GO" id="GO:0047465">
    <property type="term" value="F:N-acylglucosamine-6-phosphate 2-epimerase activity"/>
    <property type="evidence" value="ECO:0007669"/>
    <property type="project" value="UniProtKB-EC"/>
</dbReference>
<dbReference type="GO" id="GO:0005975">
    <property type="term" value="P:carbohydrate metabolic process"/>
    <property type="evidence" value="ECO:0007669"/>
    <property type="project" value="UniProtKB-UniRule"/>
</dbReference>
<dbReference type="GO" id="GO:0006053">
    <property type="term" value="P:N-acetylmannosamine catabolic process"/>
    <property type="evidence" value="ECO:0007669"/>
    <property type="project" value="TreeGrafter"/>
</dbReference>
<dbReference type="GO" id="GO:0019262">
    <property type="term" value="P:N-acetylneuraminate catabolic process"/>
    <property type="evidence" value="ECO:0007669"/>
    <property type="project" value="UniProtKB-UniRule"/>
</dbReference>
<dbReference type="CDD" id="cd04729">
    <property type="entry name" value="NanE"/>
    <property type="match status" value="1"/>
</dbReference>
<dbReference type="Gene3D" id="3.20.20.70">
    <property type="entry name" value="Aldolase class I"/>
    <property type="match status" value="1"/>
</dbReference>
<dbReference type="HAMAP" id="MF_01235">
    <property type="entry name" value="ManNAc6P_epimer"/>
    <property type="match status" value="1"/>
</dbReference>
<dbReference type="InterPro" id="IPR013785">
    <property type="entry name" value="Aldolase_TIM"/>
</dbReference>
<dbReference type="InterPro" id="IPR007260">
    <property type="entry name" value="NanE"/>
</dbReference>
<dbReference type="InterPro" id="IPR011060">
    <property type="entry name" value="RibuloseP-bd_barrel"/>
</dbReference>
<dbReference type="NCBIfam" id="NF002231">
    <property type="entry name" value="PRK01130.1"/>
    <property type="match status" value="1"/>
</dbReference>
<dbReference type="PANTHER" id="PTHR36204">
    <property type="entry name" value="N-ACETYLMANNOSAMINE-6-PHOSPHATE 2-EPIMERASE-RELATED"/>
    <property type="match status" value="1"/>
</dbReference>
<dbReference type="PANTHER" id="PTHR36204:SF1">
    <property type="entry name" value="N-ACETYLMANNOSAMINE-6-PHOSPHATE 2-EPIMERASE-RELATED"/>
    <property type="match status" value="1"/>
</dbReference>
<dbReference type="Pfam" id="PF04131">
    <property type="entry name" value="NanE"/>
    <property type="match status" value="1"/>
</dbReference>
<dbReference type="SUPFAM" id="SSF51366">
    <property type="entry name" value="Ribulose-phoshate binding barrel"/>
    <property type="match status" value="1"/>
</dbReference>
<gene>
    <name evidence="1" type="primary">nanE</name>
    <name type="ordered locus">Synpcc7942_2464</name>
</gene>
<reference key="1">
    <citation type="submission" date="2005-08" db="EMBL/GenBank/DDBJ databases">
        <title>Complete sequence of chromosome 1 of Synechococcus elongatus PCC 7942.</title>
        <authorList>
            <consortium name="US DOE Joint Genome Institute"/>
            <person name="Copeland A."/>
            <person name="Lucas S."/>
            <person name="Lapidus A."/>
            <person name="Barry K."/>
            <person name="Detter J.C."/>
            <person name="Glavina T."/>
            <person name="Hammon N."/>
            <person name="Israni S."/>
            <person name="Pitluck S."/>
            <person name="Schmutz J."/>
            <person name="Larimer F."/>
            <person name="Land M."/>
            <person name="Kyrpides N."/>
            <person name="Lykidis A."/>
            <person name="Golden S."/>
            <person name="Richardson P."/>
        </authorList>
    </citation>
    <scope>NUCLEOTIDE SEQUENCE [LARGE SCALE GENOMIC DNA]</scope>
    <source>
        <strain>ATCC 33912 / PCC 7942 / FACHB-805</strain>
    </source>
</reference>
<protein>
    <recommendedName>
        <fullName evidence="1">Putative N-acetylmannosamine-6-phosphate 2-epimerase</fullName>
        <ecNumber evidence="1">5.1.3.9</ecNumber>
    </recommendedName>
    <alternativeName>
        <fullName evidence="1">ManNAc-6-P epimerase</fullName>
    </alternativeName>
</protein>
<evidence type="ECO:0000255" key="1">
    <source>
        <dbReference type="HAMAP-Rule" id="MF_01235"/>
    </source>
</evidence>
<organism>
    <name type="scientific">Synechococcus elongatus (strain ATCC 33912 / PCC 7942 / FACHB-805)</name>
    <name type="common">Anacystis nidulans R2</name>
    <dbReference type="NCBI Taxonomy" id="1140"/>
    <lineage>
        <taxon>Bacteria</taxon>
        <taxon>Bacillati</taxon>
        <taxon>Cyanobacteriota</taxon>
        <taxon>Cyanophyceae</taxon>
        <taxon>Synechococcales</taxon>
        <taxon>Synechococcaceae</taxon>
        <taxon>Synechococcus</taxon>
    </lineage>
</organism>
<comment type="function">
    <text evidence="1">Converts N-acetylmannosamine-6-phosphate (ManNAc-6-P) to N-acetylglucosamine-6-phosphate (GlcNAc-6-P).</text>
</comment>
<comment type="catalytic activity">
    <reaction evidence="1">
        <text>an N-acyl-D-glucosamine 6-phosphate = an N-acyl-D-mannosamine 6-phosphate</text>
        <dbReference type="Rhea" id="RHEA:23932"/>
        <dbReference type="ChEBI" id="CHEBI:57599"/>
        <dbReference type="ChEBI" id="CHEBI:57666"/>
        <dbReference type="EC" id="5.1.3.9"/>
    </reaction>
</comment>
<comment type="pathway">
    <text evidence="1">Amino-sugar metabolism; N-acetylneuraminate degradation; D-fructose 6-phosphate from N-acetylneuraminate: step 3/5.</text>
</comment>
<comment type="similarity">
    <text evidence="1">Belongs to the NanE family.</text>
</comment>
<feature type="chain" id="PRO_0000301498" description="Putative N-acetylmannosamine-6-phosphate 2-epimerase">
    <location>
        <begin position="1"/>
        <end position="232"/>
    </location>
</feature>
<sequence>MDRQQQLRRLQGGLIVSCQAPADSPLHQPEIIAAIAVAAVQRGAVGIRLDTPEHVRAVRDRLPETPIIGLWKRTFPDSSVYITPRYVEAEAIAAAGADIVALDCTLRPRPDGEDFCQIIPRLQQELGCAVMADIDTLEAAIAAAKAGADLVGTTLYGYTEATQGQTPPGWDLLETAAQQLPNTPVICEGGIASAQAARQACDRGAFAVVVGTAITGIDLQVQAYVTALNARP</sequence>
<keyword id="KW-0119">Carbohydrate metabolism</keyword>
<keyword id="KW-0413">Isomerase</keyword>
<keyword id="KW-1185">Reference proteome</keyword>
<name>NANE_SYNE7</name>